<feature type="chain" id="PRO_0000364728" description="Fructose-1,6-bisphosphatase class 1">
    <location>
        <begin position="1"/>
        <end position="344"/>
    </location>
</feature>
<feature type="binding site" evidence="1">
    <location>
        <position position="107"/>
    </location>
    <ligand>
        <name>Mg(2+)</name>
        <dbReference type="ChEBI" id="CHEBI:18420"/>
        <label>1</label>
    </ligand>
</feature>
<feature type="binding site" evidence="1">
    <location>
        <position position="129"/>
    </location>
    <ligand>
        <name>Mg(2+)</name>
        <dbReference type="ChEBI" id="CHEBI:18420"/>
        <label>1</label>
    </ligand>
</feature>
<feature type="binding site" evidence="1">
    <location>
        <position position="129"/>
    </location>
    <ligand>
        <name>Mg(2+)</name>
        <dbReference type="ChEBI" id="CHEBI:18420"/>
        <label>2</label>
    </ligand>
</feature>
<feature type="binding site" evidence="1">
    <location>
        <position position="131"/>
    </location>
    <ligand>
        <name>Mg(2+)</name>
        <dbReference type="ChEBI" id="CHEBI:18420"/>
        <label>1</label>
    </ligand>
</feature>
<feature type="binding site" evidence="1">
    <location>
        <position position="132"/>
    </location>
    <ligand>
        <name>Mg(2+)</name>
        <dbReference type="ChEBI" id="CHEBI:18420"/>
        <label>2</label>
    </ligand>
</feature>
<feature type="binding site" evidence="1">
    <location>
        <position position="224"/>
    </location>
    <ligand>
        <name>substrate</name>
    </ligand>
</feature>
<feature type="binding site" evidence="1">
    <location>
        <position position="252"/>
    </location>
    <ligand>
        <name>substrate</name>
    </ligand>
</feature>
<feature type="binding site" evidence="1">
    <location>
        <position position="282"/>
    </location>
    <ligand>
        <name>substrate</name>
    </ligand>
</feature>
<feature type="binding site" evidence="1">
    <location>
        <position position="288"/>
    </location>
    <ligand>
        <name>Mg(2+)</name>
        <dbReference type="ChEBI" id="CHEBI:18420"/>
        <label>2</label>
    </ligand>
</feature>
<comment type="catalytic activity">
    <reaction evidence="1">
        <text>beta-D-fructose 1,6-bisphosphate + H2O = beta-D-fructose 6-phosphate + phosphate</text>
        <dbReference type="Rhea" id="RHEA:11064"/>
        <dbReference type="ChEBI" id="CHEBI:15377"/>
        <dbReference type="ChEBI" id="CHEBI:32966"/>
        <dbReference type="ChEBI" id="CHEBI:43474"/>
        <dbReference type="ChEBI" id="CHEBI:57634"/>
        <dbReference type="EC" id="3.1.3.11"/>
    </reaction>
</comment>
<comment type="cofactor">
    <cofactor evidence="1">
        <name>Mg(2+)</name>
        <dbReference type="ChEBI" id="CHEBI:18420"/>
    </cofactor>
    <text evidence="1">Binds 2 magnesium ions per subunit.</text>
</comment>
<comment type="pathway">
    <text evidence="1">Carbohydrate biosynthesis; Calvin cycle.</text>
</comment>
<comment type="subunit">
    <text evidence="1">Homotetramer.</text>
</comment>
<comment type="subcellular location">
    <subcellularLocation>
        <location evidence="1">Cytoplasm</location>
    </subcellularLocation>
</comment>
<comment type="similarity">
    <text evidence="1">Belongs to the FBPase class 1 family.</text>
</comment>
<comment type="sequence caution" evidence="2">
    <conflict type="erroneous initiation">
        <sequence resource="EMBL-CDS" id="BAD79957"/>
    </conflict>
</comment>
<sequence>MAQSTTSETHTRDLDRDCTTLSRHVLEQLQSFSPEAQDLAALMQRIGLAAKLIARRLSHAGLVDDALGFTGEINVQGEAVKRMDVYANQVFISVFRQSGLVCRLASEEMEKPYYIPENCPIGRYTLLYDPLDGSANVDVDLNVGSIFAVRRQEFYDESHEAKDLLQPGDRQIAAGYVLYGASTLLVYSMGQGVHVFVLDPSLGEFVLAQSDIQLPNSGQIYSVNEGNFWQWPEGYRQYIREMHRREGYSGRYSGALVADFHRILMQGGVFLYPETVKNPTGKLRLLYEAAPMAFLAEQAGGKASDGQKPILLRQPQALHERCPLIIGSAADVDFVEACLAESVP</sequence>
<organism>
    <name type="scientific">Synechococcus sp. (strain ATCC 27144 / PCC 6301 / SAUG 1402/1)</name>
    <name type="common">Anacystis nidulans</name>
    <dbReference type="NCBI Taxonomy" id="269084"/>
    <lineage>
        <taxon>Bacteria</taxon>
        <taxon>Bacillati</taxon>
        <taxon>Cyanobacteriota</taxon>
        <taxon>Cyanophyceae</taxon>
        <taxon>Synechococcales</taxon>
        <taxon>Synechococcaceae</taxon>
        <taxon>Synechococcus</taxon>
    </lineage>
</organism>
<gene>
    <name evidence="1" type="primary">fbp</name>
    <name type="ordered locus">syc1767_d</name>
</gene>
<accession>Q5N163</accession>
<proteinExistence type="inferred from homology"/>
<reference key="1">
    <citation type="journal article" date="2007" name="Photosyn. Res.">
        <title>Complete nucleotide sequence of the freshwater unicellular cyanobacterium Synechococcus elongatus PCC 6301 chromosome: gene content and organization.</title>
        <authorList>
            <person name="Sugita C."/>
            <person name="Ogata K."/>
            <person name="Shikata M."/>
            <person name="Jikuya H."/>
            <person name="Takano J."/>
            <person name="Furumichi M."/>
            <person name="Kanehisa M."/>
            <person name="Omata T."/>
            <person name="Sugiura M."/>
            <person name="Sugita M."/>
        </authorList>
    </citation>
    <scope>NUCLEOTIDE SEQUENCE [LARGE SCALE GENOMIC DNA]</scope>
    <source>
        <strain>ATCC 27144 / PCC 6301 / SAUG 1402/1</strain>
    </source>
</reference>
<name>F16PA_SYNP6</name>
<dbReference type="EC" id="3.1.3.11" evidence="1"/>
<dbReference type="EMBL" id="AP008231">
    <property type="protein sequence ID" value="BAD79957.1"/>
    <property type="status" value="ALT_INIT"/>
    <property type="molecule type" value="Genomic_DNA"/>
</dbReference>
<dbReference type="RefSeq" id="WP_011378409.1">
    <property type="nucleotide sequence ID" value="NZ_CP085785.1"/>
</dbReference>
<dbReference type="SMR" id="Q5N163"/>
<dbReference type="GeneID" id="72431222"/>
<dbReference type="KEGG" id="syc:syc1767_d"/>
<dbReference type="eggNOG" id="COG0158">
    <property type="taxonomic scope" value="Bacteria"/>
</dbReference>
<dbReference type="UniPathway" id="UPA00116"/>
<dbReference type="Proteomes" id="UP000001175">
    <property type="component" value="Chromosome"/>
</dbReference>
<dbReference type="GO" id="GO:0005829">
    <property type="term" value="C:cytosol"/>
    <property type="evidence" value="ECO:0007669"/>
    <property type="project" value="TreeGrafter"/>
</dbReference>
<dbReference type="GO" id="GO:0042132">
    <property type="term" value="F:fructose 1,6-bisphosphate 1-phosphatase activity"/>
    <property type="evidence" value="ECO:0007669"/>
    <property type="project" value="UniProtKB-UniRule"/>
</dbReference>
<dbReference type="GO" id="GO:0000287">
    <property type="term" value="F:magnesium ion binding"/>
    <property type="evidence" value="ECO:0007669"/>
    <property type="project" value="UniProtKB-UniRule"/>
</dbReference>
<dbReference type="GO" id="GO:0030388">
    <property type="term" value="P:fructose 1,6-bisphosphate metabolic process"/>
    <property type="evidence" value="ECO:0007669"/>
    <property type="project" value="TreeGrafter"/>
</dbReference>
<dbReference type="GO" id="GO:0006002">
    <property type="term" value="P:fructose 6-phosphate metabolic process"/>
    <property type="evidence" value="ECO:0007669"/>
    <property type="project" value="TreeGrafter"/>
</dbReference>
<dbReference type="GO" id="GO:0006000">
    <property type="term" value="P:fructose metabolic process"/>
    <property type="evidence" value="ECO:0007669"/>
    <property type="project" value="TreeGrafter"/>
</dbReference>
<dbReference type="GO" id="GO:0006094">
    <property type="term" value="P:gluconeogenesis"/>
    <property type="evidence" value="ECO:0007669"/>
    <property type="project" value="UniProtKB-UniRule"/>
</dbReference>
<dbReference type="GO" id="GO:0019253">
    <property type="term" value="P:reductive pentose-phosphate cycle"/>
    <property type="evidence" value="ECO:0007669"/>
    <property type="project" value="UniProtKB-UniRule"/>
</dbReference>
<dbReference type="GO" id="GO:0005986">
    <property type="term" value="P:sucrose biosynthetic process"/>
    <property type="evidence" value="ECO:0007669"/>
    <property type="project" value="TreeGrafter"/>
</dbReference>
<dbReference type="CDD" id="cd00354">
    <property type="entry name" value="FBPase"/>
    <property type="match status" value="1"/>
</dbReference>
<dbReference type="FunFam" id="3.30.540.10:FF:000002">
    <property type="entry name" value="Fructose-1,6-bisphosphatase class 1"/>
    <property type="match status" value="1"/>
</dbReference>
<dbReference type="Gene3D" id="3.40.190.80">
    <property type="match status" value="1"/>
</dbReference>
<dbReference type="Gene3D" id="3.30.540.10">
    <property type="entry name" value="Fructose-1,6-Bisphosphatase, subunit A, domain 1"/>
    <property type="match status" value="1"/>
</dbReference>
<dbReference type="HAMAP" id="MF_01855">
    <property type="entry name" value="FBPase_class1"/>
    <property type="match status" value="1"/>
</dbReference>
<dbReference type="InterPro" id="IPR044015">
    <property type="entry name" value="FBPase_C_dom"/>
</dbReference>
<dbReference type="InterPro" id="IPR000146">
    <property type="entry name" value="FBPase_class-1"/>
</dbReference>
<dbReference type="InterPro" id="IPR033391">
    <property type="entry name" value="FBPase_N"/>
</dbReference>
<dbReference type="InterPro" id="IPR028343">
    <property type="entry name" value="FBPtase"/>
</dbReference>
<dbReference type="InterPro" id="IPR020548">
    <property type="entry name" value="Fructose_bisphosphatase_AS"/>
</dbReference>
<dbReference type="NCBIfam" id="NF006778">
    <property type="entry name" value="PRK09293.1-1"/>
    <property type="match status" value="1"/>
</dbReference>
<dbReference type="PANTHER" id="PTHR11556">
    <property type="entry name" value="FRUCTOSE-1,6-BISPHOSPHATASE-RELATED"/>
    <property type="match status" value="1"/>
</dbReference>
<dbReference type="PANTHER" id="PTHR11556:SF35">
    <property type="entry name" value="SEDOHEPTULOSE-1,7-BISPHOSPHATASE, CHLOROPLASTIC"/>
    <property type="match status" value="1"/>
</dbReference>
<dbReference type="Pfam" id="PF00316">
    <property type="entry name" value="FBPase"/>
    <property type="match status" value="1"/>
</dbReference>
<dbReference type="Pfam" id="PF18913">
    <property type="entry name" value="FBPase_C"/>
    <property type="match status" value="1"/>
</dbReference>
<dbReference type="PIRSF" id="PIRSF500210">
    <property type="entry name" value="FBPtase"/>
    <property type="match status" value="1"/>
</dbReference>
<dbReference type="PIRSF" id="PIRSF000904">
    <property type="entry name" value="FBPtase_SBPase"/>
    <property type="match status" value="1"/>
</dbReference>
<dbReference type="PRINTS" id="PR00115">
    <property type="entry name" value="F16BPHPHTASE"/>
</dbReference>
<dbReference type="SUPFAM" id="SSF56655">
    <property type="entry name" value="Carbohydrate phosphatase"/>
    <property type="match status" value="1"/>
</dbReference>
<dbReference type="PROSITE" id="PS00124">
    <property type="entry name" value="FBPASE"/>
    <property type="match status" value="1"/>
</dbReference>
<evidence type="ECO:0000255" key="1">
    <source>
        <dbReference type="HAMAP-Rule" id="MF_01855"/>
    </source>
</evidence>
<evidence type="ECO:0000305" key="2"/>
<keyword id="KW-0113">Calvin cycle</keyword>
<keyword id="KW-0119">Carbohydrate metabolism</keyword>
<keyword id="KW-0963">Cytoplasm</keyword>
<keyword id="KW-0378">Hydrolase</keyword>
<keyword id="KW-0460">Magnesium</keyword>
<keyword id="KW-0479">Metal-binding</keyword>
<protein>
    <recommendedName>
        <fullName evidence="1">Fructose-1,6-bisphosphatase class 1</fullName>
        <shortName evidence="1">FBPase class 1</shortName>
        <ecNumber evidence="1">3.1.3.11</ecNumber>
    </recommendedName>
    <alternativeName>
        <fullName evidence="1">D-fructose-1,6-bisphosphate 1-phosphohydrolase class 1</fullName>
    </alternativeName>
</protein>